<feature type="signal peptide" evidence="3">
    <location>
        <begin position="1"/>
        <end position="22"/>
    </location>
</feature>
<feature type="propeptide" id="PRO_0000456328" evidence="2">
    <location>
        <begin position="23"/>
        <end position="47"/>
    </location>
</feature>
<feature type="peptide" id="PRO_0000456329" description="Conotoxin Vi6.9" evidence="2">
    <location>
        <begin position="48"/>
        <end position="79"/>
    </location>
</feature>
<feature type="modified residue" description="4-hydroxyproline" evidence="2">
    <location>
        <position position="60"/>
    </location>
</feature>
<feature type="modified residue" description="4-hydroxyproline" evidence="2">
    <location>
        <position position="63"/>
    </location>
</feature>
<feature type="disulfide bond" evidence="1">
    <location>
        <begin position="49"/>
        <end position="62"/>
    </location>
</feature>
<feature type="disulfide bond" evidence="1">
    <location>
        <begin position="56"/>
        <end position="67"/>
    </location>
</feature>
<feature type="disulfide bond" evidence="1">
    <location>
        <begin position="61"/>
        <end position="77"/>
    </location>
</feature>
<accession>P0DW76</accession>
<evidence type="ECO:0000250" key="1">
    <source>
        <dbReference type="UniProtKB" id="P60179"/>
    </source>
</evidence>
<evidence type="ECO:0000250" key="2">
    <source>
        <dbReference type="UniProtKB" id="Q5K0C7"/>
    </source>
</evidence>
<evidence type="ECO:0000255" key="3"/>
<evidence type="ECO:0000303" key="4">
    <source>
    </source>
</evidence>
<evidence type="ECO:0000305" key="5"/>
<evidence type="ECO:0000305" key="6">
    <source>
    </source>
</evidence>
<protein>
    <recommendedName>
        <fullName evidence="5">Conotoxin Vi6.9</fullName>
    </recommendedName>
    <alternativeName>
        <fullName evidence="4">virgo 3</fullName>
    </alternativeName>
</protein>
<dbReference type="GO" id="GO:0005576">
    <property type="term" value="C:extracellular region"/>
    <property type="evidence" value="ECO:0007669"/>
    <property type="project" value="UniProtKB-SubCell"/>
</dbReference>
<dbReference type="GO" id="GO:0008200">
    <property type="term" value="F:ion channel inhibitor activity"/>
    <property type="evidence" value="ECO:0007669"/>
    <property type="project" value="InterPro"/>
</dbReference>
<dbReference type="GO" id="GO:0090729">
    <property type="term" value="F:toxin activity"/>
    <property type="evidence" value="ECO:0007669"/>
    <property type="project" value="UniProtKB-KW"/>
</dbReference>
<dbReference type="InterPro" id="IPR004214">
    <property type="entry name" value="Conotoxin"/>
</dbReference>
<dbReference type="Pfam" id="PF02950">
    <property type="entry name" value="Conotoxin"/>
    <property type="match status" value="1"/>
</dbReference>
<keyword id="KW-1015">Disulfide bond</keyword>
<keyword id="KW-0379">Hydroxylation</keyword>
<keyword id="KW-0872">Ion channel impairing toxin</keyword>
<keyword id="KW-0960">Knottin</keyword>
<keyword id="KW-0964">Secreted</keyword>
<keyword id="KW-0732">Signal</keyword>
<keyword id="KW-0800">Toxin</keyword>
<comment type="function">
    <text evidence="2">Ion channel inhibitor that inhibits the increase in intracellular calcium upon depolarization in DRG neurons. In vivo, both intraperitoneal and intracranial injections into mice induce hyperactivity.</text>
</comment>
<comment type="subcellular location">
    <subcellularLocation>
        <location evidence="6">Secreted</location>
    </subcellularLocation>
</comment>
<comment type="tissue specificity">
    <text evidence="6">Expressed by the venom duct.</text>
</comment>
<comment type="domain">
    <text evidence="5">The presence of a 'disulfide through disulfide knot' structurally defines this protein as a knottin.</text>
</comment>
<comment type="domain">
    <text evidence="5">The cysteine framework is VI/VII (C-C-CC-C-C).</text>
</comment>
<comment type="similarity">
    <text evidence="5">Belongs to the conotoxin O1 superfamily.</text>
</comment>
<reference key="1">
    <citation type="journal article" date="2005" name="Peptides">
        <title>Direct cDNA cloning of novel conopeptide precursors of the O-superfamily.</title>
        <authorList>
            <person name="Kauferstein S."/>
            <person name="Melaun C."/>
            <person name="Mebs D."/>
        </authorList>
    </citation>
    <scope>NUCLEOTIDE SEQUENCE [MRNA]</scope>
    <source>
        <tissue>Venom duct</tissue>
    </source>
</reference>
<name>O169_CONVR</name>
<proteinExistence type="inferred from homology"/>
<sequence>MKLTCMVIITVLFLTASQLITADYSRDQRQYRAVRLGDEMRNFKGARDCGGQGEGCYTQPCCPGLRCRGGGTGGGSCQP</sequence>
<organism>
    <name type="scientific">Conus virgo</name>
    <name type="common">Virgin cone</name>
    <dbReference type="NCBI Taxonomy" id="89427"/>
    <lineage>
        <taxon>Eukaryota</taxon>
        <taxon>Metazoa</taxon>
        <taxon>Spiralia</taxon>
        <taxon>Lophotrochozoa</taxon>
        <taxon>Mollusca</taxon>
        <taxon>Gastropoda</taxon>
        <taxon>Caenogastropoda</taxon>
        <taxon>Neogastropoda</taxon>
        <taxon>Conoidea</taxon>
        <taxon>Conidae</taxon>
        <taxon>Conus</taxon>
        <taxon>Virgiconus</taxon>
    </lineage>
</organism>